<comment type="function">
    <text evidence="1">Peptide chain release factor 1 directs the termination of translation in response to the peptide chain termination codons UAG and UAA.</text>
</comment>
<comment type="subcellular location">
    <subcellularLocation>
        <location evidence="1">Cytoplasm</location>
    </subcellularLocation>
</comment>
<comment type="PTM">
    <text evidence="1">Methylated by PrmC. Methylation increases the termination efficiency of RF1.</text>
</comment>
<comment type="similarity">
    <text evidence="1">Belongs to the prokaryotic/mitochondrial release factor family.</text>
</comment>
<reference key="1">
    <citation type="journal article" date="2008" name="Genome Res.">
        <title>Genome sequence of the beta-rhizobium Cupriavidus taiwanensis and comparative genomics of rhizobia.</title>
        <authorList>
            <person name="Amadou C."/>
            <person name="Pascal G."/>
            <person name="Mangenot S."/>
            <person name="Glew M."/>
            <person name="Bontemps C."/>
            <person name="Capela D."/>
            <person name="Carrere S."/>
            <person name="Cruveiller S."/>
            <person name="Dossat C."/>
            <person name="Lajus A."/>
            <person name="Marchetti M."/>
            <person name="Poinsot V."/>
            <person name="Rouy Z."/>
            <person name="Servin B."/>
            <person name="Saad M."/>
            <person name="Schenowitz C."/>
            <person name="Barbe V."/>
            <person name="Batut J."/>
            <person name="Medigue C."/>
            <person name="Masson-Boivin C."/>
        </authorList>
    </citation>
    <scope>NUCLEOTIDE SEQUENCE [LARGE SCALE GENOMIC DNA]</scope>
    <source>
        <strain>DSM 17343 / BCRC 17206 / CCUG 44338 / CIP 107171 / LMG 19424 / R1</strain>
    </source>
</reference>
<protein>
    <recommendedName>
        <fullName evidence="1">Peptide chain release factor 1</fullName>
        <shortName evidence="1">RF-1</shortName>
    </recommendedName>
</protein>
<gene>
    <name evidence="1" type="primary">prfA</name>
    <name type="ordered locus">RALTA_A2795</name>
</gene>
<dbReference type="EMBL" id="CU633749">
    <property type="protein sequence ID" value="CAQ70722.1"/>
    <property type="molecule type" value="Genomic_DNA"/>
</dbReference>
<dbReference type="RefSeq" id="WP_012354016.1">
    <property type="nucleotide sequence ID" value="NC_010528.1"/>
</dbReference>
<dbReference type="SMR" id="B3R722"/>
<dbReference type="GeneID" id="29763004"/>
<dbReference type="KEGG" id="cti:RALTA_A2795"/>
<dbReference type="eggNOG" id="COG0216">
    <property type="taxonomic scope" value="Bacteria"/>
</dbReference>
<dbReference type="HOGENOM" id="CLU_036856_0_1_4"/>
<dbReference type="BioCyc" id="CTAI977880:RALTA_RS13615-MONOMER"/>
<dbReference type="Proteomes" id="UP000001692">
    <property type="component" value="Chromosome 1"/>
</dbReference>
<dbReference type="GO" id="GO:0005737">
    <property type="term" value="C:cytoplasm"/>
    <property type="evidence" value="ECO:0007669"/>
    <property type="project" value="UniProtKB-SubCell"/>
</dbReference>
<dbReference type="GO" id="GO:0016149">
    <property type="term" value="F:translation release factor activity, codon specific"/>
    <property type="evidence" value="ECO:0007669"/>
    <property type="project" value="UniProtKB-UniRule"/>
</dbReference>
<dbReference type="FunFam" id="3.30.160.20:FF:000004">
    <property type="entry name" value="Peptide chain release factor 1"/>
    <property type="match status" value="1"/>
</dbReference>
<dbReference type="FunFam" id="3.30.70.1660:FF:000002">
    <property type="entry name" value="Peptide chain release factor 1"/>
    <property type="match status" value="1"/>
</dbReference>
<dbReference type="FunFam" id="3.30.70.1660:FF:000004">
    <property type="entry name" value="Peptide chain release factor 1"/>
    <property type="match status" value="1"/>
</dbReference>
<dbReference type="Gene3D" id="3.30.160.20">
    <property type="match status" value="1"/>
</dbReference>
<dbReference type="Gene3D" id="3.30.70.1660">
    <property type="match status" value="1"/>
</dbReference>
<dbReference type="Gene3D" id="6.10.140.1950">
    <property type="match status" value="1"/>
</dbReference>
<dbReference type="HAMAP" id="MF_00093">
    <property type="entry name" value="Rel_fac_1"/>
    <property type="match status" value="1"/>
</dbReference>
<dbReference type="InterPro" id="IPR005139">
    <property type="entry name" value="PCRF"/>
</dbReference>
<dbReference type="InterPro" id="IPR000352">
    <property type="entry name" value="Pep_chain_release_fac_I"/>
</dbReference>
<dbReference type="InterPro" id="IPR045853">
    <property type="entry name" value="Pep_chain_release_fac_I_sf"/>
</dbReference>
<dbReference type="InterPro" id="IPR050057">
    <property type="entry name" value="Prokaryotic/Mito_RF"/>
</dbReference>
<dbReference type="InterPro" id="IPR004373">
    <property type="entry name" value="RF-1"/>
</dbReference>
<dbReference type="NCBIfam" id="TIGR00019">
    <property type="entry name" value="prfA"/>
    <property type="match status" value="1"/>
</dbReference>
<dbReference type="NCBIfam" id="NF001859">
    <property type="entry name" value="PRK00591.1"/>
    <property type="match status" value="1"/>
</dbReference>
<dbReference type="PANTHER" id="PTHR43804">
    <property type="entry name" value="LD18447P"/>
    <property type="match status" value="1"/>
</dbReference>
<dbReference type="PANTHER" id="PTHR43804:SF7">
    <property type="entry name" value="LD18447P"/>
    <property type="match status" value="1"/>
</dbReference>
<dbReference type="Pfam" id="PF03462">
    <property type="entry name" value="PCRF"/>
    <property type="match status" value="1"/>
</dbReference>
<dbReference type="Pfam" id="PF00472">
    <property type="entry name" value="RF-1"/>
    <property type="match status" value="1"/>
</dbReference>
<dbReference type="SMART" id="SM00937">
    <property type="entry name" value="PCRF"/>
    <property type="match status" value="1"/>
</dbReference>
<dbReference type="SUPFAM" id="SSF75620">
    <property type="entry name" value="Release factor"/>
    <property type="match status" value="1"/>
</dbReference>
<dbReference type="PROSITE" id="PS00745">
    <property type="entry name" value="RF_PROK_I"/>
    <property type="match status" value="1"/>
</dbReference>
<sequence>MKASMLAKLDQLAERLDEVNALLAREDATANIDQYRKLSREHAELSPVAEQYSQYRQAQDDLATAQALLDDPEMKDFAADEIAAARDRLEALQASLQRLLLPKDPNDDRNLLLEIRAGTGGEESALFAADLLRMYTRYAERQRWQVEVMSESESDLGGYKEVIIRIAGDAAFSRLKFESGGHRVQRVPATEAQGRIHTSACTVAVMPEADEVGEVEINPADLRIDTFRASGAGGQHVNKTDSAVRLTHLPTGIVVECQDDRSQHRNKDKAMKVLAARIKDMQTRAAQAREASTRRNLIGSGDRSDRIRTYNFPQGRVTDHRINLTLYKIDMIMDGDMDELLSALSAEHQADQLAALGEDA</sequence>
<name>RF1_CUPTR</name>
<organism>
    <name type="scientific">Cupriavidus taiwanensis (strain DSM 17343 / BCRC 17206 / CCUG 44338 / CIP 107171 / LMG 19424 / R1)</name>
    <name type="common">Ralstonia taiwanensis (strain LMG 19424)</name>
    <dbReference type="NCBI Taxonomy" id="977880"/>
    <lineage>
        <taxon>Bacteria</taxon>
        <taxon>Pseudomonadati</taxon>
        <taxon>Pseudomonadota</taxon>
        <taxon>Betaproteobacteria</taxon>
        <taxon>Burkholderiales</taxon>
        <taxon>Burkholderiaceae</taxon>
        <taxon>Cupriavidus</taxon>
    </lineage>
</organism>
<accession>B3R722</accession>
<evidence type="ECO:0000255" key="1">
    <source>
        <dbReference type="HAMAP-Rule" id="MF_00093"/>
    </source>
</evidence>
<proteinExistence type="inferred from homology"/>
<feature type="chain" id="PRO_1000093447" description="Peptide chain release factor 1">
    <location>
        <begin position="1"/>
        <end position="360"/>
    </location>
</feature>
<feature type="modified residue" description="N5-methylglutamine" evidence="1">
    <location>
        <position position="235"/>
    </location>
</feature>
<keyword id="KW-0963">Cytoplasm</keyword>
<keyword id="KW-0488">Methylation</keyword>
<keyword id="KW-0648">Protein biosynthesis</keyword>